<sequence length="598" mass="66658">MRTEYCGQLNLSHVGQSVTLCGWVNRRRDLGGLIFIDMRDREGIVQVFFDPDHKAAFEQASELRNEFCIQITGTVRARPDSQINKDMSTGEVEIFANTLNIINRSEPLPLDSNQINSEEQRLKYRYLDLRRPEMADRLKSRAKITSFVRRFMDDHGFLDIETPMLTKATPEGARDYLVPSRVHKGKFYALPQSPQLFKQLLMMSGFDRYYQIVKCFRDEDLRADRQPEFTQIDVETSFMSADQVREVMEKLVRELWQETKGVDLGDFPVMTFAEAMRRYGSDKPDLRNPLELVDVASLVKDVEFKVFSGPANDAKGRVAALRVPGGAQLSRKQIDEYGQFVGIYGAKGLAWLKVNDRAAGLEGVQSPIAKFLSSEVLDAILVATQAESGDILFFGADSYKIVTDAMGALRLKVGRDLELTRLGTWAPLWVVDFPMFEDDSEGGLTAMHHPFTAPKDMSPEQLAAAPTTAIANAYDMVINGYEVGGGSVRIHRTEMQQTVFGILGITEDEQREKFGFLLDALKFGTPPHAGLAFGLDRLVMLLTGTDNIRDVIAFPKTTAAACLMTDAPSFANPASLQELSISVVAKKGTTDAGAEENQ</sequence>
<gene>
    <name evidence="1" type="primary">aspS</name>
    <name type="ordered locus">YPK_2148</name>
</gene>
<keyword id="KW-0030">Aminoacyl-tRNA synthetase</keyword>
<keyword id="KW-0067">ATP-binding</keyword>
<keyword id="KW-0963">Cytoplasm</keyword>
<keyword id="KW-0436">Ligase</keyword>
<keyword id="KW-0547">Nucleotide-binding</keyword>
<keyword id="KW-0648">Protein biosynthesis</keyword>
<organism>
    <name type="scientific">Yersinia pseudotuberculosis serotype O:3 (strain YPIII)</name>
    <dbReference type="NCBI Taxonomy" id="502800"/>
    <lineage>
        <taxon>Bacteria</taxon>
        <taxon>Pseudomonadati</taxon>
        <taxon>Pseudomonadota</taxon>
        <taxon>Gammaproteobacteria</taxon>
        <taxon>Enterobacterales</taxon>
        <taxon>Yersiniaceae</taxon>
        <taxon>Yersinia</taxon>
    </lineage>
</organism>
<evidence type="ECO:0000255" key="1">
    <source>
        <dbReference type="HAMAP-Rule" id="MF_00044"/>
    </source>
</evidence>
<feature type="chain" id="PRO_1000091068" description="Aspartate--tRNA ligase">
    <location>
        <begin position="1"/>
        <end position="598"/>
    </location>
</feature>
<feature type="region of interest" description="Aspartate" evidence="1">
    <location>
        <begin position="195"/>
        <end position="198"/>
    </location>
</feature>
<feature type="binding site" evidence="1">
    <location>
        <position position="171"/>
    </location>
    <ligand>
        <name>L-aspartate</name>
        <dbReference type="ChEBI" id="CHEBI:29991"/>
    </ligand>
</feature>
<feature type="binding site" evidence="1">
    <location>
        <begin position="217"/>
        <end position="219"/>
    </location>
    <ligand>
        <name>ATP</name>
        <dbReference type="ChEBI" id="CHEBI:30616"/>
    </ligand>
</feature>
<feature type="binding site" evidence="1">
    <location>
        <position position="217"/>
    </location>
    <ligand>
        <name>L-aspartate</name>
        <dbReference type="ChEBI" id="CHEBI:29991"/>
    </ligand>
</feature>
<feature type="binding site" evidence="1">
    <location>
        <position position="226"/>
    </location>
    <ligand>
        <name>ATP</name>
        <dbReference type="ChEBI" id="CHEBI:30616"/>
    </ligand>
</feature>
<feature type="binding site" evidence="1">
    <location>
        <position position="448"/>
    </location>
    <ligand>
        <name>L-aspartate</name>
        <dbReference type="ChEBI" id="CHEBI:29991"/>
    </ligand>
</feature>
<feature type="binding site" evidence="1">
    <location>
        <position position="482"/>
    </location>
    <ligand>
        <name>ATP</name>
        <dbReference type="ChEBI" id="CHEBI:30616"/>
    </ligand>
</feature>
<feature type="binding site" evidence="1">
    <location>
        <position position="489"/>
    </location>
    <ligand>
        <name>L-aspartate</name>
        <dbReference type="ChEBI" id="CHEBI:29991"/>
    </ligand>
</feature>
<feature type="binding site" evidence="1">
    <location>
        <begin position="534"/>
        <end position="537"/>
    </location>
    <ligand>
        <name>ATP</name>
        <dbReference type="ChEBI" id="CHEBI:30616"/>
    </ligand>
</feature>
<proteinExistence type="inferred from homology"/>
<accession>B1JLL5</accession>
<dbReference type="EC" id="6.1.1.12" evidence="1"/>
<dbReference type="EMBL" id="CP000950">
    <property type="protein sequence ID" value="ACA68434.1"/>
    <property type="molecule type" value="Genomic_DNA"/>
</dbReference>
<dbReference type="RefSeq" id="WP_012304108.1">
    <property type="nucleotide sequence ID" value="NZ_CP009792.1"/>
</dbReference>
<dbReference type="SMR" id="B1JLL5"/>
<dbReference type="KEGG" id="ypy:YPK_2148"/>
<dbReference type="PATRIC" id="fig|502800.11.peg.2821"/>
<dbReference type="GO" id="GO:0005737">
    <property type="term" value="C:cytoplasm"/>
    <property type="evidence" value="ECO:0007669"/>
    <property type="project" value="UniProtKB-SubCell"/>
</dbReference>
<dbReference type="GO" id="GO:0004815">
    <property type="term" value="F:aspartate-tRNA ligase activity"/>
    <property type="evidence" value="ECO:0007669"/>
    <property type="project" value="UniProtKB-UniRule"/>
</dbReference>
<dbReference type="GO" id="GO:0005524">
    <property type="term" value="F:ATP binding"/>
    <property type="evidence" value="ECO:0007669"/>
    <property type="project" value="UniProtKB-UniRule"/>
</dbReference>
<dbReference type="GO" id="GO:0003676">
    <property type="term" value="F:nucleic acid binding"/>
    <property type="evidence" value="ECO:0007669"/>
    <property type="project" value="InterPro"/>
</dbReference>
<dbReference type="GO" id="GO:0006422">
    <property type="term" value="P:aspartyl-tRNA aminoacylation"/>
    <property type="evidence" value="ECO:0007669"/>
    <property type="project" value="UniProtKB-UniRule"/>
</dbReference>
<dbReference type="CDD" id="cd00777">
    <property type="entry name" value="AspRS_core"/>
    <property type="match status" value="1"/>
</dbReference>
<dbReference type="CDD" id="cd04317">
    <property type="entry name" value="EcAspRS_like_N"/>
    <property type="match status" value="1"/>
</dbReference>
<dbReference type="FunFam" id="2.40.50.140:FF:000080">
    <property type="entry name" value="Aspartate--tRNA ligase"/>
    <property type="match status" value="1"/>
</dbReference>
<dbReference type="Gene3D" id="3.30.930.10">
    <property type="entry name" value="Bira Bifunctional Protein, Domain 2"/>
    <property type="match status" value="1"/>
</dbReference>
<dbReference type="Gene3D" id="3.30.1360.30">
    <property type="entry name" value="GAD-like domain"/>
    <property type="match status" value="1"/>
</dbReference>
<dbReference type="Gene3D" id="2.40.50.140">
    <property type="entry name" value="Nucleic acid-binding proteins"/>
    <property type="match status" value="1"/>
</dbReference>
<dbReference type="HAMAP" id="MF_00044">
    <property type="entry name" value="Asp_tRNA_synth_type1"/>
    <property type="match status" value="1"/>
</dbReference>
<dbReference type="InterPro" id="IPR004364">
    <property type="entry name" value="Aa-tRNA-synt_II"/>
</dbReference>
<dbReference type="InterPro" id="IPR006195">
    <property type="entry name" value="aa-tRNA-synth_II"/>
</dbReference>
<dbReference type="InterPro" id="IPR045864">
    <property type="entry name" value="aa-tRNA-synth_II/BPL/LPL"/>
</dbReference>
<dbReference type="InterPro" id="IPR004524">
    <property type="entry name" value="Asp-tRNA-ligase_1"/>
</dbReference>
<dbReference type="InterPro" id="IPR047089">
    <property type="entry name" value="Asp-tRNA-ligase_1_N"/>
</dbReference>
<dbReference type="InterPro" id="IPR002312">
    <property type="entry name" value="Asp/Asn-tRNA-synth_IIb"/>
</dbReference>
<dbReference type="InterPro" id="IPR047090">
    <property type="entry name" value="AspRS_core"/>
</dbReference>
<dbReference type="InterPro" id="IPR004115">
    <property type="entry name" value="GAD-like_sf"/>
</dbReference>
<dbReference type="InterPro" id="IPR029351">
    <property type="entry name" value="GAD_dom"/>
</dbReference>
<dbReference type="InterPro" id="IPR012340">
    <property type="entry name" value="NA-bd_OB-fold"/>
</dbReference>
<dbReference type="InterPro" id="IPR004365">
    <property type="entry name" value="NA-bd_OB_tRNA"/>
</dbReference>
<dbReference type="NCBIfam" id="TIGR00459">
    <property type="entry name" value="aspS_bact"/>
    <property type="match status" value="1"/>
</dbReference>
<dbReference type="NCBIfam" id="NF001750">
    <property type="entry name" value="PRK00476.1"/>
    <property type="match status" value="1"/>
</dbReference>
<dbReference type="PANTHER" id="PTHR22594:SF5">
    <property type="entry name" value="ASPARTATE--TRNA LIGASE, MITOCHONDRIAL"/>
    <property type="match status" value="1"/>
</dbReference>
<dbReference type="PANTHER" id="PTHR22594">
    <property type="entry name" value="ASPARTYL/LYSYL-TRNA SYNTHETASE"/>
    <property type="match status" value="1"/>
</dbReference>
<dbReference type="Pfam" id="PF02938">
    <property type="entry name" value="GAD"/>
    <property type="match status" value="1"/>
</dbReference>
<dbReference type="Pfam" id="PF00152">
    <property type="entry name" value="tRNA-synt_2"/>
    <property type="match status" value="1"/>
</dbReference>
<dbReference type="Pfam" id="PF01336">
    <property type="entry name" value="tRNA_anti-codon"/>
    <property type="match status" value="1"/>
</dbReference>
<dbReference type="PRINTS" id="PR01042">
    <property type="entry name" value="TRNASYNTHASP"/>
</dbReference>
<dbReference type="SUPFAM" id="SSF55681">
    <property type="entry name" value="Class II aaRS and biotin synthetases"/>
    <property type="match status" value="1"/>
</dbReference>
<dbReference type="SUPFAM" id="SSF55261">
    <property type="entry name" value="GAD domain-like"/>
    <property type="match status" value="1"/>
</dbReference>
<dbReference type="SUPFAM" id="SSF50249">
    <property type="entry name" value="Nucleic acid-binding proteins"/>
    <property type="match status" value="1"/>
</dbReference>
<dbReference type="PROSITE" id="PS50862">
    <property type="entry name" value="AA_TRNA_LIGASE_II"/>
    <property type="match status" value="1"/>
</dbReference>
<protein>
    <recommendedName>
        <fullName evidence="1">Aspartate--tRNA ligase</fullName>
        <ecNumber evidence="1">6.1.1.12</ecNumber>
    </recommendedName>
    <alternativeName>
        <fullName evidence="1">Aspartyl-tRNA synthetase</fullName>
        <shortName evidence="1">AspRS</shortName>
    </alternativeName>
</protein>
<reference key="1">
    <citation type="submission" date="2008-02" db="EMBL/GenBank/DDBJ databases">
        <title>Complete sequence of Yersinia pseudotuberculosis YPIII.</title>
        <authorList>
            <consortium name="US DOE Joint Genome Institute"/>
            <person name="Copeland A."/>
            <person name="Lucas S."/>
            <person name="Lapidus A."/>
            <person name="Glavina del Rio T."/>
            <person name="Dalin E."/>
            <person name="Tice H."/>
            <person name="Bruce D."/>
            <person name="Goodwin L."/>
            <person name="Pitluck S."/>
            <person name="Munk A.C."/>
            <person name="Brettin T."/>
            <person name="Detter J.C."/>
            <person name="Han C."/>
            <person name="Tapia R."/>
            <person name="Schmutz J."/>
            <person name="Larimer F."/>
            <person name="Land M."/>
            <person name="Hauser L."/>
            <person name="Challacombe J.F."/>
            <person name="Green L."/>
            <person name="Lindler L.E."/>
            <person name="Nikolich M.P."/>
            <person name="Richardson P."/>
        </authorList>
    </citation>
    <scope>NUCLEOTIDE SEQUENCE [LARGE SCALE GENOMIC DNA]</scope>
    <source>
        <strain>YPIII</strain>
    </source>
</reference>
<name>SYD_YERPY</name>
<comment type="function">
    <text evidence="1">Catalyzes the attachment of L-aspartate to tRNA(Asp) in a two-step reaction: L-aspartate is first activated by ATP to form Asp-AMP and then transferred to the acceptor end of tRNA(Asp).</text>
</comment>
<comment type="catalytic activity">
    <reaction evidence="1">
        <text>tRNA(Asp) + L-aspartate + ATP = L-aspartyl-tRNA(Asp) + AMP + diphosphate</text>
        <dbReference type="Rhea" id="RHEA:19649"/>
        <dbReference type="Rhea" id="RHEA-COMP:9660"/>
        <dbReference type="Rhea" id="RHEA-COMP:9678"/>
        <dbReference type="ChEBI" id="CHEBI:29991"/>
        <dbReference type="ChEBI" id="CHEBI:30616"/>
        <dbReference type="ChEBI" id="CHEBI:33019"/>
        <dbReference type="ChEBI" id="CHEBI:78442"/>
        <dbReference type="ChEBI" id="CHEBI:78516"/>
        <dbReference type="ChEBI" id="CHEBI:456215"/>
        <dbReference type="EC" id="6.1.1.12"/>
    </reaction>
</comment>
<comment type="subunit">
    <text evidence="1">Homodimer.</text>
</comment>
<comment type="subcellular location">
    <subcellularLocation>
        <location evidence="1">Cytoplasm</location>
    </subcellularLocation>
</comment>
<comment type="similarity">
    <text evidence="1">Belongs to the class-II aminoacyl-tRNA synthetase family. Type 1 subfamily.</text>
</comment>